<protein>
    <recommendedName>
        <fullName>Protein SWT21</fullName>
    </recommendedName>
    <alternativeName>
        <fullName>Synthetic With TGS1 protein 21</fullName>
    </alternativeName>
</protein>
<comment type="function">
    <text evidence="1">Involved in mRNA splicing. Helps to stabilize the U1 snRNP-5' splice site interaction (By similarity).</text>
</comment>
<comment type="subunit">
    <text evidence="1">Associates with snRNPs.</text>
</comment>
<comment type="subcellular location">
    <subcellularLocation>
        <location evidence="1">Nucleus</location>
    </subcellularLocation>
</comment>
<comment type="similarity">
    <text evidence="2">Belongs to the SWT21 family.</text>
</comment>
<comment type="sequence caution" evidence="2">
    <conflict type="erroneous initiation">
        <sequence resource="EMBL-CDS" id="EDZ69789"/>
    </conflict>
    <text>Extended N-terminus.</text>
</comment>
<sequence length="357" mass="40308">MEKKVICQDIFWSCDGTSFVSVHNDFGIRQYLVPEESNTDKLNRNLLLPFTRFFRNQSIVSCAIDPFYTLYNENSDRLAGDRIVVGGKNFPLQLYSLMDGQCILSYDTMNKINGEYETVYSVKIDVESRVYTGSCRNKVAIYDKSRRDAVWMNQSTKKASKGRQSIISCFEEQPMGGQALSRGSLLCGSYANEMFQVDCRHQRLERLNYTRTVAGGIVQILTSDNGRYVYVVRRNSDAISIYDRRNLQHELNVLRLPFRIHHNSAKLKAYIDTAYGLSMGTPQGTILNWGRDLVEFGGVPSHNSVEDPLITSIPPESEWRTNLDSTIPATVVKNCPGDPELFALSHGGTISLCRFGG</sequence>
<reference key="1">
    <citation type="journal article" date="2008" name="FEMS Yeast Res.">
        <title>Comparative genome analysis of a Saccharomyces cerevisiae wine strain.</title>
        <authorList>
            <person name="Borneman A.R."/>
            <person name="Forgan A.H."/>
            <person name="Pretorius I.S."/>
            <person name="Chambers P.J."/>
        </authorList>
    </citation>
    <scope>NUCLEOTIDE SEQUENCE [LARGE SCALE GENOMIC DNA]</scope>
    <source>
        <strain>AWRI1631</strain>
    </source>
</reference>
<name>SWT21_YEAS6</name>
<keyword id="KW-0507">mRNA processing</keyword>
<keyword id="KW-0508">mRNA splicing</keyword>
<keyword id="KW-0539">Nucleus</keyword>
<feature type="chain" id="PRO_0000405686" description="Protein SWT21">
    <location>
        <begin position="1"/>
        <end position="357"/>
    </location>
</feature>
<organism>
    <name type="scientific">Saccharomyces cerevisiae (strain AWRI1631)</name>
    <name type="common">Baker's yeast</name>
    <dbReference type="NCBI Taxonomy" id="545124"/>
    <lineage>
        <taxon>Eukaryota</taxon>
        <taxon>Fungi</taxon>
        <taxon>Dikarya</taxon>
        <taxon>Ascomycota</taxon>
        <taxon>Saccharomycotina</taxon>
        <taxon>Saccharomycetes</taxon>
        <taxon>Saccharomycetales</taxon>
        <taxon>Saccharomycetaceae</taxon>
        <taxon>Saccharomyces</taxon>
    </lineage>
</organism>
<dbReference type="EMBL" id="ABSV01001976">
    <property type="protein sequence ID" value="EDZ69789.1"/>
    <property type="status" value="ALT_INIT"/>
    <property type="molecule type" value="Genomic_DNA"/>
</dbReference>
<dbReference type="SMR" id="B5VQM2"/>
<dbReference type="OrthoDB" id="38073at4893"/>
<dbReference type="Proteomes" id="UP000008988">
    <property type="component" value="Unassembled WGS sequence"/>
</dbReference>
<dbReference type="GO" id="GO:0005634">
    <property type="term" value="C:nucleus"/>
    <property type="evidence" value="ECO:0007669"/>
    <property type="project" value="UniProtKB-SubCell"/>
</dbReference>
<dbReference type="GO" id="GO:0006397">
    <property type="term" value="P:mRNA processing"/>
    <property type="evidence" value="ECO:0007669"/>
    <property type="project" value="UniProtKB-KW"/>
</dbReference>
<dbReference type="GO" id="GO:0008380">
    <property type="term" value="P:RNA splicing"/>
    <property type="evidence" value="ECO:0007669"/>
    <property type="project" value="UniProtKB-KW"/>
</dbReference>
<dbReference type="Gene3D" id="2.130.10.10">
    <property type="entry name" value="YVTN repeat-like/Quinoprotein amine dehydrogenase"/>
    <property type="match status" value="1"/>
</dbReference>
<dbReference type="InterPro" id="IPR051150">
    <property type="entry name" value="SWT21/TCAB1_mRNA_Telomere"/>
</dbReference>
<dbReference type="InterPro" id="IPR015943">
    <property type="entry name" value="WD40/YVTN_repeat-like_dom_sf"/>
</dbReference>
<dbReference type="InterPro" id="IPR036322">
    <property type="entry name" value="WD40_repeat_dom_sf"/>
</dbReference>
<dbReference type="PANTHER" id="PTHR13211">
    <property type="entry name" value="TELOMERASE CAJAL BODY PROTEIN 1"/>
    <property type="match status" value="1"/>
</dbReference>
<dbReference type="PANTHER" id="PTHR13211:SF0">
    <property type="entry name" value="TELOMERASE CAJAL BODY PROTEIN 1"/>
    <property type="match status" value="1"/>
</dbReference>
<dbReference type="SUPFAM" id="SSF50978">
    <property type="entry name" value="WD40 repeat-like"/>
    <property type="match status" value="1"/>
</dbReference>
<evidence type="ECO:0000250" key="1"/>
<evidence type="ECO:0000305" key="2"/>
<proteinExistence type="inferred from homology"/>
<gene>
    <name type="primary">SWT21</name>
    <name type="ORF">AWRI1631_141440</name>
</gene>
<accession>B5VQM2</accession>